<proteinExistence type="inferred from homology"/>
<evidence type="ECO:0000250" key="1"/>
<evidence type="ECO:0000305" key="2"/>
<comment type="function">
    <text>Insulin decreases blood glucose concentration. It increases cell permeability to monosaccharides, amino acids and fatty acids. It accelerates glycolysis, the pentose phosphate cycle, and glycogen synthesis in liver.</text>
</comment>
<comment type="subunit">
    <text>Heterodimer of a B chain and an A chain linked by two disulfide bonds.</text>
</comment>
<comment type="subcellular location">
    <subcellularLocation>
        <location>Secreted</location>
    </subcellularLocation>
</comment>
<comment type="similarity">
    <text evidence="2">Belongs to the insulin family.</text>
</comment>
<sequence length="110" mass="12004">MALWTRLLPLLALLALLGPDPAQAFVNQHLCGSHLVEALYLVCGERGFFYTPKSRREVEEQQGGQVELGGGPGAGLPQPLALEMALQKRGIVEQCCTSICSLYQLENYCN</sequence>
<reference key="1">
    <citation type="submission" date="2001-06" db="EMBL/GenBank/DDBJ databases">
        <title>Regulation of PDK4 expression in a hibernating mammal.</title>
        <authorList>
            <person name="Tredrea M.M."/>
            <person name="Buck M.J."/>
            <person name="Guhaniyogi J."/>
            <person name="Squire T.L."/>
            <person name="Andrews M.T."/>
        </authorList>
    </citation>
    <scope>NUCLEOTIDE SEQUENCE [MRNA]</scope>
    <source>
        <tissue>Pancreas</tissue>
    </source>
</reference>
<name>INS_ICTTR</name>
<organism>
    <name type="scientific">Ictidomys tridecemlineatus</name>
    <name type="common">Thirteen-lined ground squirrel</name>
    <name type="synonym">Spermophilus tridecemlineatus</name>
    <dbReference type="NCBI Taxonomy" id="43179"/>
    <lineage>
        <taxon>Eukaryota</taxon>
        <taxon>Metazoa</taxon>
        <taxon>Chordata</taxon>
        <taxon>Craniata</taxon>
        <taxon>Vertebrata</taxon>
        <taxon>Euteleostomi</taxon>
        <taxon>Mammalia</taxon>
        <taxon>Eutheria</taxon>
        <taxon>Euarchontoglires</taxon>
        <taxon>Glires</taxon>
        <taxon>Rodentia</taxon>
        <taxon>Sciuromorpha</taxon>
        <taxon>Sciuridae</taxon>
        <taxon>Xerinae</taxon>
        <taxon>Marmotini</taxon>
        <taxon>Ictidomys</taxon>
    </lineage>
</organism>
<keyword id="KW-0119">Carbohydrate metabolism</keyword>
<keyword id="KW-0165">Cleavage on pair of basic residues</keyword>
<keyword id="KW-1015">Disulfide bond</keyword>
<keyword id="KW-0313">Glucose metabolism</keyword>
<keyword id="KW-0372">Hormone</keyword>
<keyword id="KW-1185">Reference proteome</keyword>
<keyword id="KW-0964">Secreted</keyword>
<keyword id="KW-0732">Signal</keyword>
<accession>Q91XI3</accession>
<protein>
    <recommendedName>
        <fullName>Insulin</fullName>
    </recommendedName>
    <component>
        <recommendedName>
            <fullName>Insulin B chain</fullName>
        </recommendedName>
    </component>
    <component>
        <recommendedName>
            <fullName>Insulin A chain</fullName>
        </recommendedName>
    </component>
</protein>
<feature type="signal peptide" evidence="1">
    <location>
        <begin position="1"/>
        <end position="24"/>
    </location>
</feature>
<feature type="peptide" id="PRO_0000015912" description="Insulin B chain">
    <location>
        <begin position="25"/>
        <end position="54"/>
    </location>
</feature>
<feature type="propeptide" id="PRO_0000015913" description="C peptide">
    <location>
        <begin position="57"/>
        <end position="87"/>
    </location>
</feature>
<feature type="peptide" id="PRO_0000015914" description="Insulin A chain">
    <location>
        <begin position="90"/>
        <end position="110"/>
    </location>
</feature>
<feature type="disulfide bond" description="Interchain (between B and A chains)" evidence="1">
    <location>
        <begin position="31"/>
        <end position="96"/>
    </location>
</feature>
<feature type="disulfide bond" description="Interchain (between B and A chains)" evidence="1">
    <location>
        <begin position="43"/>
        <end position="109"/>
    </location>
</feature>
<feature type="disulfide bond" evidence="1">
    <location>
        <begin position="95"/>
        <end position="100"/>
    </location>
</feature>
<dbReference type="EMBL" id="AY038604">
    <property type="protein sequence ID" value="AAK72558.1"/>
    <property type="molecule type" value="mRNA"/>
</dbReference>
<dbReference type="RefSeq" id="NP_001269184.1">
    <property type="nucleotide sequence ID" value="NM_001282255.1"/>
</dbReference>
<dbReference type="SMR" id="Q91XI3"/>
<dbReference type="FunCoup" id="Q91XI3">
    <property type="interactions" value="1205"/>
</dbReference>
<dbReference type="STRING" id="43179.ENSSTOP00000017025"/>
<dbReference type="Ensembl" id="ENSSTOT00000022326.1">
    <property type="protein sequence ID" value="ENSSTOP00000017025.1"/>
    <property type="gene ID" value="ENSSTOG00000026937.1"/>
</dbReference>
<dbReference type="GeneID" id="101966207"/>
<dbReference type="KEGG" id="iti:101966207"/>
<dbReference type="CTD" id="3630"/>
<dbReference type="eggNOG" id="ENOG502S5P5">
    <property type="taxonomic scope" value="Eukaryota"/>
</dbReference>
<dbReference type="GeneTree" id="ENSGT00390000015440"/>
<dbReference type="HOGENOM" id="CLU_140421_1_0_1"/>
<dbReference type="InParanoid" id="Q91XI3"/>
<dbReference type="OMA" id="LANQHLC"/>
<dbReference type="OrthoDB" id="10019596at2759"/>
<dbReference type="TreeFam" id="TF332820"/>
<dbReference type="Proteomes" id="UP000005215">
    <property type="component" value="Unassembled WGS sequence"/>
</dbReference>
<dbReference type="GO" id="GO:0005615">
    <property type="term" value="C:extracellular space"/>
    <property type="evidence" value="ECO:0007669"/>
    <property type="project" value="Ensembl"/>
</dbReference>
<dbReference type="GO" id="GO:0005179">
    <property type="term" value="F:hormone activity"/>
    <property type="evidence" value="ECO:0007669"/>
    <property type="project" value="UniProtKB-KW"/>
</dbReference>
<dbReference type="GO" id="GO:0042802">
    <property type="term" value="F:identical protein binding"/>
    <property type="evidence" value="ECO:0007669"/>
    <property type="project" value="Ensembl"/>
</dbReference>
<dbReference type="GO" id="GO:0005158">
    <property type="term" value="F:insulin receptor binding"/>
    <property type="evidence" value="ECO:0007669"/>
    <property type="project" value="Ensembl"/>
</dbReference>
<dbReference type="GO" id="GO:0005159">
    <property type="term" value="F:insulin-like growth factor receptor binding"/>
    <property type="evidence" value="ECO:0007669"/>
    <property type="project" value="Ensembl"/>
</dbReference>
<dbReference type="GO" id="GO:0002020">
    <property type="term" value="F:protease binding"/>
    <property type="evidence" value="ECO:0007669"/>
    <property type="project" value="Ensembl"/>
</dbReference>
<dbReference type="GO" id="GO:0006953">
    <property type="term" value="P:acute-phase response"/>
    <property type="evidence" value="ECO:0007669"/>
    <property type="project" value="Ensembl"/>
</dbReference>
<dbReference type="GO" id="GO:0046631">
    <property type="term" value="P:alpha-beta T cell activation"/>
    <property type="evidence" value="ECO:0007669"/>
    <property type="project" value="Ensembl"/>
</dbReference>
<dbReference type="GO" id="GO:0055089">
    <property type="term" value="P:fatty acid homeostasis"/>
    <property type="evidence" value="ECO:0007669"/>
    <property type="project" value="Ensembl"/>
</dbReference>
<dbReference type="GO" id="GO:0007186">
    <property type="term" value="P:G protein-coupled receptor signaling pathway"/>
    <property type="evidence" value="ECO:0007669"/>
    <property type="project" value="Ensembl"/>
</dbReference>
<dbReference type="GO" id="GO:0042593">
    <property type="term" value="P:glucose homeostasis"/>
    <property type="evidence" value="ECO:0007669"/>
    <property type="project" value="Ensembl"/>
</dbReference>
<dbReference type="GO" id="GO:0006006">
    <property type="term" value="P:glucose metabolic process"/>
    <property type="evidence" value="ECO:0007669"/>
    <property type="project" value="UniProtKB-KW"/>
</dbReference>
<dbReference type="GO" id="GO:0008286">
    <property type="term" value="P:insulin receptor signaling pathway"/>
    <property type="evidence" value="ECO:0007669"/>
    <property type="project" value="Ensembl"/>
</dbReference>
<dbReference type="GO" id="GO:0002674">
    <property type="term" value="P:negative regulation of acute inflammatory response"/>
    <property type="evidence" value="ECO:0007669"/>
    <property type="project" value="Ensembl"/>
</dbReference>
<dbReference type="GO" id="GO:0045922">
    <property type="term" value="P:negative regulation of fatty acid metabolic process"/>
    <property type="evidence" value="ECO:0007669"/>
    <property type="project" value="Ensembl"/>
</dbReference>
<dbReference type="GO" id="GO:2000252">
    <property type="term" value="P:negative regulation of feeding behavior"/>
    <property type="evidence" value="ECO:0007669"/>
    <property type="project" value="Ensembl"/>
</dbReference>
<dbReference type="GO" id="GO:0010629">
    <property type="term" value="P:negative regulation of gene expression"/>
    <property type="evidence" value="ECO:0007669"/>
    <property type="project" value="Ensembl"/>
</dbReference>
<dbReference type="GO" id="GO:0045818">
    <property type="term" value="P:negative regulation of glycogen catabolic process"/>
    <property type="evidence" value="ECO:0007669"/>
    <property type="project" value="Ensembl"/>
</dbReference>
<dbReference type="GO" id="GO:0050995">
    <property type="term" value="P:negative regulation of lipid catabolic process"/>
    <property type="evidence" value="ECO:0007669"/>
    <property type="project" value="Ensembl"/>
</dbReference>
<dbReference type="GO" id="GO:0042177">
    <property type="term" value="P:negative regulation of protein catabolic process"/>
    <property type="evidence" value="ECO:0007669"/>
    <property type="project" value="Ensembl"/>
</dbReference>
<dbReference type="GO" id="GO:0050709">
    <property type="term" value="P:negative regulation of protein secretion"/>
    <property type="evidence" value="ECO:0007669"/>
    <property type="project" value="Ensembl"/>
</dbReference>
<dbReference type="GO" id="GO:1903427">
    <property type="term" value="P:negative regulation of reactive oxygen species biosynthetic process"/>
    <property type="evidence" value="ECO:0007669"/>
    <property type="project" value="Ensembl"/>
</dbReference>
<dbReference type="GO" id="GO:0060266">
    <property type="term" value="P:negative regulation of respiratory burst involved in inflammatory response"/>
    <property type="evidence" value="ECO:0007669"/>
    <property type="project" value="Ensembl"/>
</dbReference>
<dbReference type="GO" id="GO:1990535">
    <property type="term" value="P:neuron projection maintenance"/>
    <property type="evidence" value="ECO:0007669"/>
    <property type="project" value="Ensembl"/>
</dbReference>
<dbReference type="GO" id="GO:0038060">
    <property type="term" value="P:nitric oxide-cGMP-mediated signaling"/>
    <property type="evidence" value="ECO:0007669"/>
    <property type="project" value="Ensembl"/>
</dbReference>
<dbReference type="GO" id="GO:0043123">
    <property type="term" value="P:positive regulation of canonical NF-kappaB signal transduction"/>
    <property type="evidence" value="ECO:0007669"/>
    <property type="project" value="Ensembl"/>
</dbReference>
<dbReference type="GO" id="GO:0008284">
    <property type="term" value="P:positive regulation of cell population proliferation"/>
    <property type="evidence" value="ECO:0007669"/>
    <property type="project" value="Ensembl"/>
</dbReference>
<dbReference type="GO" id="GO:0001819">
    <property type="term" value="P:positive regulation of cytokine production"/>
    <property type="evidence" value="ECO:0007669"/>
    <property type="project" value="Ensembl"/>
</dbReference>
<dbReference type="GO" id="GO:0046326">
    <property type="term" value="P:positive regulation of D-glucose import"/>
    <property type="evidence" value="ECO:0007669"/>
    <property type="project" value="Ensembl"/>
</dbReference>
<dbReference type="GO" id="GO:1902952">
    <property type="term" value="P:positive regulation of dendritic spine maintenance"/>
    <property type="evidence" value="ECO:0007669"/>
    <property type="project" value="Ensembl"/>
</dbReference>
<dbReference type="GO" id="GO:0045725">
    <property type="term" value="P:positive regulation of glycogen biosynthetic process"/>
    <property type="evidence" value="ECO:0007669"/>
    <property type="project" value="Ensembl"/>
</dbReference>
<dbReference type="GO" id="GO:0045821">
    <property type="term" value="P:positive regulation of glycolytic process"/>
    <property type="evidence" value="ECO:0007669"/>
    <property type="project" value="Ensembl"/>
</dbReference>
<dbReference type="GO" id="GO:0046628">
    <property type="term" value="P:positive regulation of insulin receptor signaling pathway"/>
    <property type="evidence" value="ECO:0007669"/>
    <property type="project" value="Ensembl"/>
</dbReference>
<dbReference type="GO" id="GO:0043410">
    <property type="term" value="P:positive regulation of MAPK cascade"/>
    <property type="evidence" value="ECO:0007669"/>
    <property type="project" value="Ensembl"/>
</dbReference>
<dbReference type="GO" id="GO:0045840">
    <property type="term" value="P:positive regulation of mitotic nuclear division"/>
    <property type="evidence" value="ECO:0007669"/>
    <property type="project" value="Ensembl"/>
</dbReference>
<dbReference type="GO" id="GO:0010750">
    <property type="term" value="P:positive regulation of nitric oxide mediated signal transduction"/>
    <property type="evidence" value="ECO:0007669"/>
    <property type="project" value="Ensembl"/>
</dbReference>
<dbReference type="GO" id="GO:0051897">
    <property type="term" value="P:positive regulation of phosphatidylinositol 3-kinase/protein kinase B signal transduction"/>
    <property type="evidence" value="ECO:0007669"/>
    <property type="project" value="Ensembl"/>
</dbReference>
<dbReference type="GO" id="GO:1900182">
    <property type="term" value="P:positive regulation of protein localization to nucleus"/>
    <property type="evidence" value="ECO:0007669"/>
    <property type="project" value="Ensembl"/>
</dbReference>
<dbReference type="GO" id="GO:0050714">
    <property type="term" value="P:positive regulation of protein secretion"/>
    <property type="evidence" value="ECO:0007669"/>
    <property type="project" value="TreeGrafter"/>
</dbReference>
<dbReference type="GO" id="GO:0060267">
    <property type="term" value="P:positive regulation of respiratory burst"/>
    <property type="evidence" value="ECO:0007669"/>
    <property type="project" value="Ensembl"/>
</dbReference>
<dbReference type="GO" id="GO:1903076">
    <property type="term" value="P:regulation of protein localization to plasma membrane"/>
    <property type="evidence" value="ECO:0007669"/>
    <property type="project" value="Ensembl"/>
</dbReference>
<dbReference type="GO" id="GO:0042311">
    <property type="term" value="P:vasodilation"/>
    <property type="evidence" value="ECO:0007669"/>
    <property type="project" value="Ensembl"/>
</dbReference>
<dbReference type="GO" id="GO:0042060">
    <property type="term" value="P:wound healing"/>
    <property type="evidence" value="ECO:0007669"/>
    <property type="project" value="Ensembl"/>
</dbReference>
<dbReference type="CDD" id="cd04367">
    <property type="entry name" value="IlGF_insulin_like"/>
    <property type="match status" value="1"/>
</dbReference>
<dbReference type="FunFam" id="1.10.100.10:FF:000003">
    <property type="entry name" value="Insulin"/>
    <property type="match status" value="1"/>
</dbReference>
<dbReference type="Gene3D" id="1.10.100.10">
    <property type="entry name" value="Insulin-like"/>
    <property type="match status" value="1"/>
</dbReference>
<dbReference type="InterPro" id="IPR004825">
    <property type="entry name" value="Insulin"/>
</dbReference>
<dbReference type="InterPro" id="IPR016179">
    <property type="entry name" value="Insulin-like"/>
</dbReference>
<dbReference type="InterPro" id="IPR036438">
    <property type="entry name" value="Insulin-like_sf"/>
</dbReference>
<dbReference type="InterPro" id="IPR022353">
    <property type="entry name" value="Insulin_CS"/>
</dbReference>
<dbReference type="InterPro" id="IPR022352">
    <property type="entry name" value="Insulin_family"/>
</dbReference>
<dbReference type="PANTHER" id="PTHR11454:SF9">
    <property type="entry name" value="INSULIN"/>
    <property type="match status" value="1"/>
</dbReference>
<dbReference type="PANTHER" id="PTHR11454">
    <property type="entry name" value="INSULIN/INSULIN GROWTH FACTOR"/>
    <property type="match status" value="1"/>
</dbReference>
<dbReference type="Pfam" id="PF00049">
    <property type="entry name" value="Insulin"/>
    <property type="match status" value="1"/>
</dbReference>
<dbReference type="PRINTS" id="PR00277">
    <property type="entry name" value="INSULIN"/>
</dbReference>
<dbReference type="PRINTS" id="PR00276">
    <property type="entry name" value="INSULINFAMLY"/>
</dbReference>
<dbReference type="SMART" id="SM00078">
    <property type="entry name" value="IlGF"/>
    <property type="match status" value="1"/>
</dbReference>
<dbReference type="SUPFAM" id="SSF56994">
    <property type="entry name" value="Insulin-like"/>
    <property type="match status" value="1"/>
</dbReference>
<dbReference type="PROSITE" id="PS00262">
    <property type="entry name" value="INSULIN"/>
    <property type="match status" value="1"/>
</dbReference>
<gene>
    <name type="primary">INS</name>
</gene>